<evidence type="ECO:0000255" key="1">
    <source>
        <dbReference type="HAMAP-Rule" id="MF_00439"/>
    </source>
</evidence>
<evidence type="ECO:0000305" key="2"/>
<reference key="1">
    <citation type="journal article" date="2006" name="Plant Cell Rep.">
        <title>Complete sequence and organization of the cucumber (Cucumis sativus L. cv. Baekmibaekdadagi) chloroplast genome.</title>
        <authorList>
            <person name="Kim J.-S."/>
            <person name="Jung J.D."/>
            <person name="Lee J.-A."/>
            <person name="Park H.-W."/>
            <person name="Oh K.-H."/>
            <person name="Jeong W.J."/>
            <person name="Choi D.-W."/>
            <person name="Liu J.R."/>
            <person name="Cho K.Y."/>
        </authorList>
    </citation>
    <scope>NUCLEOTIDE SEQUENCE [LARGE SCALE GENOMIC DNA]</scope>
    <source>
        <strain>cv. Baekmibaekdadagi</strain>
    </source>
</reference>
<reference key="2">
    <citation type="journal article" date="2007" name="Cell. Mol. Biol. Lett.">
        <title>The complete structure of the cucumber (Cucumis sativus L.) chloroplast genome: its composition and comparative analysis.</title>
        <authorList>
            <person name="Plader W.W."/>
            <person name="Yukawa Y."/>
            <person name="Sugiura M."/>
            <person name="Malepszy S."/>
        </authorList>
    </citation>
    <scope>NUCLEOTIDE SEQUENCE [LARGE SCALE GENOMIC DNA]</scope>
    <source>
        <strain>cv. Borszczagowski</strain>
    </source>
</reference>
<reference key="3">
    <citation type="journal article" date="2007" name="Genome">
        <title>Sequencing cucumber (Cucumis sativus L.) chloroplast genomes identifies differences between chilling-tolerant and -susceptible cucumber lines.</title>
        <authorList>
            <person name="Chung S.-M."/>
            <person name="Gordon V.S."/>
            <person name="Staub J.E."/>
        </authorList>
    </citation>
    <scope>NUCLEOTIDE SEQUENCE [LARGE SCALE GENOMIC DNA]</scope>
    <source>
        <strain>cv. Chipper</strain>
        <strain>cv. Gy14</strain>
    </source>
</reference>
<sequence length="169" mass="19611">MPRSGGINGNFIDKTFSIVANILLRIIPTTSGEKEAFTYYRDGMSAQSEGNYAEALQNYYEAMRLEIDPYDRSYILYNIGLIHTRNGEHTKALEYYFRALERNPFLPQAFNNMAVICHYRGEQAIRQGDSEIAEAWFNQAAEYWKQAIALTPGNYIEAQNWLKITRRFK</sequence>
<organism>
    <name type="scientific">Cucumis sativus</name>
    <name type="common">Cucumber</name>
    <dbReference type="NCBI Taxonomy" id="3659"/>
    <lineage>
        <taxon>Eukaryota</taxon>
        <taxon>Viridiplantae</taxon>
        <taxon>Streptophyta</taxon>
        <taxon>Embryophyta</taxon>
        <taxon>Tracheophyta</taxon>
        <taxon>Spermatophyta</taxon>
        <taxon>Magnoliopsida</taxon>
        <taxon>eudicotyledons</taxon>
        <taxon>Gunneridae</taxon>
        <taxon>Pentapetalae</taxon>
        <taxon>rosids</taxon>
        <taxon>fabids</taxon>
        <taxon>Cucurbitales</taxon>
        <taxon>Cucurbitaceae</taxon>
        <taxon>Benincaseae</taxon>
        <taxon>Cucumis</taxon>
    </lineage>
</organism>
<comment type="function">
    <text evidence="1">Essential for the assembly of the photosystem I (PSI) complex. May act as a chaperone-like factor to guide the assembly of the PSI subunits.</text>
</comment>
<comment type="subcellular location">
    <subcellularLocation>
        <location evidence="1">Plastid</location>
        <location evidence="1">Chloroplast thylakoid membrane</location>
        <topology evidence="1">Peripheral membrane protein</topology>
    </subcellularLocation>
</comment>
<comment type="similarity">
    <text evidence="1">Belongs to the Ycf3 family.</text>
</comment>
<comment type="sequence caution" evidence="2">
    <conflict type="erroneous gene model prediction">
        <sequence resource="EMBL-CDS" id="ABI97418"/>
    </conflict>
</comment>
<protein>
    <recommendedName>
        <fullName evidence="1">Photosystem I assembly protein Ycf3</fullName>
    </recommendedName>
</protein>
<accession>Q4VZH4</accession>
<accession>A5J1T5</accession>
<accession>A5J219</accession>
<proteinExistence type="inferred from homology"/>
<gene>
    <name evidence="1" type="primary">ycf3</name>
    <name type="ordered locus">CsCp035</name>
</gene>
<name>YCF3_CUCSA</name>
<dbReference type="EMBL" id="DQ119058">
    <property type="protein sequence ID" value="AAZ94652.1"/>
    <property type="molecule type" value="Genomic_DNA"/>
</dbReference>
<dbReference type="EMBL" id="AJ970307">
    <property type="protein sequence ID" value="CAJ00759.1"/>
    <property type="molecule type" value="Genomic_DNA"/>
</dbReference>
<dbReference type="EMBL" id="DQ865976">
    <property type="protein sequence ID" value="ABI98747.1"/>
    <property type="molecule type" value="Genomic_DNA"/>
</dbReference>
<dbReference type="EMBL" id="DQ865975">
    <property type="protein sequence ID" value="ABI97418.1"/>
    <property type="status" value="ALT_SEQ"/>
    <property type="molecule type" value="Genomic_DNA"/>
</dbReference>
<dbReference type="RefSeq" id="YP_247600.1">
    <property type="nucleotide sequence ID" value="NC_007144.1"/>
</dbReference>
<dbReference type="SMR" id="Q4VZH4"/>
<dbReference type="GeneID" id="3429360"/>
<dbReference type="KEGG" id="csv:3429360"/>
<dbReference type="OrthoDB" id="431027at2759"/>
<dbReference type="GO" id="GO:0009535">
    <property type="term" value="C:chloroplast thylakoid membrane"/>
    <property type="evidence" value="ECO:0007669"/>
    <property type="project" value="UniProtKB-SubCell"/>
</dbReference>
<dbReference type="GO" id="GO:0015979">
    <property type="term" value="P:photosynthesis"/>
    <property type="evidence" value="ECO:0007669"/>
    <property type="project" value="UniProtKB-UniRule"/>
</dbReference>
<dbReference type="FunFam" id="1.25.40.10:FF:000004">
    <property type="entry name" value="Photosystem I assembly protein Ycf3"/>
    <property type="match status" value="1"/>
</dbReference>
<dbReference type="Gene3D" id="1.25.40.10">
    <property type="entry name" value="Tetratricopeptide repeat domain"/>
    <property type="match status" value="1"/>
</dbReference>
<dbReference type="HAMAP" id="MF_00439">
    <property type="entry name" value="Ycf3"/>
    <property type="match status" value="1"/>
</dbReference>
<dbReference type="InterPro" id="IPR022818">
    <property type="entry name" value="PSI_Ycf3_assembly"/>
</dbReference>
<dbReference type="InterPro" id="IPR011990">
    <property type="entry name" value="TPR-like_helical_dom_sf"/>
</dbReference>
<dbReference type="InterPro" id="IPR019734">
    <property type="entry name" value="TPR_rpt"/>
</dbReference>
<dbReference type="InterPro" id="IPR051685">
    <property type="entry name" value="Ycf3/AcsC/BcsC/TPR_MFPF"/>
</dbReference>
<dbReference type="NCBIfam" id="NF002725">
    <property type="entry name" value="PRK02603.1"/>
    <property type="match status" value="1"/>
</dbReference>
<dbReference type="PANTHER" id="PTHR44943">
    <property type="entry name" value="CELLULOSE SYNTHASE OPERON PROTEIN C"/>
    <property type="match status" value="1"/>
</dbReference>
<dbReference type="PANTHER" id="PTHR44943:SF8">
    <property type="entry name" value="TPR REPEAT-CONTAINING PROTEIN MJ0263"/>
    <property type="match status" value="1"/>
</dbReference>
<dbReference type="Pfam" id="PF00515">
    <property type="entry name" value="TPR_1"/>
    <property type="match status" value="1"/>
</dbReference>
<dbReference type="SMART" id="SM00028">
    <property type="entry name" value="TPR"/>
    <property type="match status" value="3"/>
</dbReference>
<dbReference type="SUPFAM" id="SSF48452">
    <property type="entry name" value="TPR-like"/>
    <property type="match status" value="1"/>
</dbReference>
<dbReference type="PROSITE" id="PS50005">
    <property type="entry name" value="TPR"/>
    <property type="match status" value="3"/>
</dbReference>
<dbReference type="PROSITE" id="PS50293">
    <property type="entry name" value="TPR_REGION"/>
    <property type="match status" value="1"/>
</dbReference>
<feature type="chain" id="PRO_0000275614" description="Photosystem I assembly protein Ycf3">
    <location>
        <begin position="1"/>
        <end position="169"/>
    </location>
</feature>
<feature type="repeat" description="TPR 1">
    <location>
        <begin position="36"/>
        <end position="69"/>
    </location>
</feature>
<feature type="repeat" description="TPR 2">
    <location>
        <begin position="73"/>
        <end position="106"/>
    </location>
</feature>
<feature type="repeat" description="TPR 3">
    <location>
        <begin position="121"/>
        <end position="154"/>
    </location>
</feature>
<geneLocation type="chloroplast"/>
<keyword id="KW-0150">Chloroplast</keyword>
<keyword id="KW-0472">Membrane</keyword>
<keyword id="KW-0602">Photosynthesis</keyword>
<keyword id="KW-0934">Plastid</keyword>
<keyword id="KW-0677">Repeat</keyword>
<keyword id="KW-0793">Thylakoid</keyword>
<keyword id="KW-0802">TPR repeat</keyword>